<proteinExistence type="evidence at transcript level"/>
<organism>
    <name type="scientific">Arabidopsis thaliana</name>
    <name type="common">Mouse-ear cress</name>
    <dbReference type="NCBI Taxonomy" id="3702"/>
    <lineage>
        <taxon>Eukaryota</taxon>
        <taxon>Viridiplantae</taxon>
        <taxon>Streptophyta</taxon>
        <taxon>Embryophyta</taxon>
        <taxon>Tracheophyta</taxon>
        <taxon>Spermatophyta</taxon>
        <taxon>Magnoliopsida</taxon>
        <taxon>eudicotyledons</taxon>
        <taxon>Gunneridae</taxon>
        <taxon>Pentapetalae</taxon>
        <taxon>rosids</taxon>
        <taxon>malvids</taxon>
        <taxon>Brassicales</taxon>
        <taxon>Brassicaceae</taxon>
        <taxon>Camelineae</taxon>
        <taxon>Arabidopsis</taxon>
    </lineage>
</organism>
<comment type="subcellular location">
    <subcellularLocation>
        <location evidence="2">Membrane</location>
        <topology evidence="2">Multi-pass membrane protein</topology>
    </subcellularLocation>
</comment>
<comment type="similarity">
    <text evidence="2">Belongs to the TPT transporter family. TPT (TC 2.A.7.9) subfamily.</text>
</comment>
<comment type="sequence caution" evidence="2">
    <conflict type="erroneous initiation">
        <sequence resource="EMBL-CDS" id="BAB09676"/>
    </conflict>
    <text>Truncated N-terminus.</text>
</comment>
<dbReference type="EMBL" id="AB005237">
    <property type="protein sequence ID" value="BAB09676.1"/>
    <property type="status" value="ALT_INIT"/>
    <property type="molecule type" value="Genomic_DNA"/>
</dbReference>
<dbReference type="EMBL" id="CP002688">
    <property type="protein sequence ID" value="AED90929.1"/>
    <property type="molecule type" value="Genomic_DNA"/>
</dbReference>
<dbReference type="EMBL" id="BT014979">
    <property type="protein sequence ID" value="AAT70430.1"/>
    <property type="molecule type" value="mRNA"/>
</dbReference>
<dbReference type="EMBL" id="BT015715">
    <property type="protein sequence ID" value="AAU45213.1"/>
    <property type="molecule type" value="mRNA"/>
</dbReference>
<dbReference type="RefSeq" id="NP_196201.2">
    <property type="nucleotide sequence ID" value="NM_120664.4"/>
</dbReference>
<dbReference type="SMR" id="Q6DBP3"/>
<dbReference type="BioGRID" id="15746">
    <property type="interactions" value="20"/>
</dbReference>
<dbReference type="FunCoup" id="Q6DBP3">
    <property type="interactions" value="1034"/>
</dbReference>
<dbReference type="IntAct" id="Q6DBP3">
    <property type="interactions" value="20"/>
</dbReference>
<dbReference type="STRING" id="3702.Q6DBP3"/>
<dbReference type="PaxDb" id="3702-AT5G05820.1"/>
<dbReference type="ProteomicsDB" id="248840"/>
<dbReference type="EnsemblPlants" id="AT5G05820.1">
    <property type="protein sequence ID" value="AT5G05820.1"/>
    <property type="gene ID" value="AT5G05820"/>
</dbReference>
<dbReference type="GeneID" id="830467"/>
<dbReference type="Gramene" id="AT5G05820.1">
    <property type="protein sequence ID" value="AT5G05820.1"/>
    <property type="gene ID" value="AT5G05820"/>
</dbReference>
<dbReference type="KEGG" id="ath:AT5G05820"/>
<dbReference type="Araport" id="AT5G05820"/>
<dbReference type="TAIR" id="AT5G05820">
    <property type="gene designation" value="UUAT3"/>
</dbReference>
<dbReference type="eggNOG" id="KOG1441">
    <property type="taxonomic scope" value="Eukaryota"/>
</dbReference>
<dbReference type="HOGENOM" id="CLU_022332_2_1_1"/>
<dbReference type="InParanoid" id="Q6DBP3"/>
<dbReference type="OMA" id="SAMAYCV"/>
<dbReference type="OrthoDB" id="10261634at2759"/>
<dbReference type="PhylomeDB" id="Q6DBP3"/>
<dbReference type="PRO" id="PR:Q6DBP3"/>
<dbReference type="Proteomes" id="UP000006548">
    <property type="component" value="Chromosome 5"/>
</dbReference>
<dbReference type="ExpressionAtlas" id="Q6DBP3">
    <property type="expression patterns" value="baseline and differential"/>
</dbReference>
<dbReference type="GO" id="GO:0005794">
    <property type="term" value="C:Golgi apparatus"/>
    <property type="evidence" value="ECO:0007005"/>
    <property type="project" value="TAIR"/>
</dbReference>
<dbReference type="GO" id="GO:0016020">
    <property type="term" value="C:membrane"/>
    <property type="evidence" value="ECO:0007669"/>
    <property type="project" value="UniProtKB-SubCell"/>
</dbReference>
<dbReference type="InterPro" id="IPR004853">
    <property type="entry name" value="Sugar_P_trans_dom"/>
</dbReference>
<dbReference type="InterPro" id="IPR050186">
    <property type="entry name" value="TPT_transporter"/>
</dbReference>
<dbReference type="PANTHER" id="PTHR11132">
    <property type="entry name" value="SOLUTE CARRIER FAMILY 35"/>
    <property type="match status" value="1"/>
</dbReference>
<dbReference type="Pfam" id="PF03151">
    <property type="entry name" value="TPT"/>
    <property type="match status" value="1"/>
</dbReference>
<dbReference type="SUPFAM" id="SSF103481">
    <property type="entry name" value="Multidrug resistance efflux transporter EmrE"/>
    <property type="match status" value="2"/>
</dbReference>
<protein>
    <recommendedName>
        <fullName>Probable sugar phosphate/phosphate translocator At5g05820</fullName>
    </recommendedName>
</protein>
<feature type="chain" id="PRO_0000406116" description="Probable sugar phosphate/phosphate translocator At5g05820">
    <location>
        <begin position="1"/>
        <end position="309"/>
    </location>
</feature>
<feature type="transmembrane region" description="Helical" evidence="1">
    <location>
        <begin position="9"/>
        <end position="29"/>
    </location>
</feature>
<feature type="transmembrane region" description="Helical" evidence="1">
    <location>
        <begin position="42"/>
        <end position="62"/>
    </location>
</feature>
<feature type="transmembrane region" description="Helical" evidence="1">
    <location>
        <begin position="77"/>
        <end position="97"/>
    </location>
</feature>
<feature type="transmembrane region" description="Helical" evidence="1">
    <location>
        <begin position="100"/>
        <end position="120"/>
    </location>
</feature>
<feature type="transmembrane region" description="Helical" evidence="1">
    <location>
        <begin position="130"/>
        <end position="150"/>
    </location>
</feature>
<feature type="transmembrane region" description="Helical" evidence="1">
    <location>
        <begin position="154"/>
        <end position="174"/>
    </location>
</feature>
<feature type="transmembrane region" description="Helical" evidence="1">
    <location>
        <begin position="192"/>
        <end position="212"/>
    </location>
</feature>
<feature type="transmembrane region" description="Helical" evidence="1">
    <location>
        <begin position="229"/>
        <end position="249"/>
    </location>
</feature>
<feature type="transmembrane region" description="Helical" evidence="1">
    <location>
        <begin position="256"/>
        <end position="278"/>
    </location>
</feature>
<feature type="transmembrane region" description="Helical" evidence="1">
    <location>
        <begin position="282"/>
        <end position="301"/>
    </location>
</feature>
<feature type="domain" description="EamA">
    <location>
        <begin position="30"/>
        <end position="147"/>
    </location>
</feature>
<accession>Q6DBP3</accession>
<accession>Q9FFJ6</accession>
<keyword id="KW-0472">Membrane</keyword>
<keyword id="KW-1185">Reference proteome</keyword>
<keyword id="KW-0762">Sugar transport</keyword>
<keyword id="KW-0812">Transmembrane</keyword>
<keyword id="KW-1133">Transmembrane helix</keyword>
<keyword id="KW-0813">Transport</keyword>
<gene>
    <name type="ordered locus">At5g05820</name>
    <name type="ORF">MJJ3.24</name>
</gene>
<reference key="1">
    <citation type="journal article" date="1997" name="DNA Res.">
        <title>Structural analysis of Arabidopsis thaliana chromosome 5. I. Sequence features of the 1.6 Mb regions covered by twenty physically assigned P1 clones.</title>
        <authorList>
            <person name="Sato S."/>
            <person name="Kotani H."/>
            <person name="Nakamura Y."/>
            <person name="Kaneko T."/>
            <person name="Asamizu E."/>
            <person name="Fukami M."/>
            <person name="Miyajima N."/>
            <person name="Tabata S."/>
        </authorList>
    </citation>
    <scope>NUCLEOTIDE SEQUENCE [LARGE SCALE GENOMIC DNA]</scope>
    <source>
        <strain>cv. Columbia</strain>
    </source>
</reference>
<reference key="2">
    <citation type="journal article" date="2017" name="Plant J.">
        <title>Araport11: a complete reannotation of the Arabidopsis thaliana reference genome.</title>
        <authorList>
            <person name="Cheng C.Y."/>
            <person name="Krishnakumar V."/>
            <person name="Chan A.P."/>
            <person name="Thibaud-Nissen F."/>
            <person name="Schobel S."/>
            <person name="Town C.D."/>
        </authorList>
    </citation>
    <scope>GENOME REANNOTATION</scope>
    <source>
        <strain>cv. Columbia</strain>
    </source>
</reference>
<reference key="3">
    <citation type="submission" date="2004-09" db="EMBL/GenBank/DDBJ databases">
        <title>Arabidopsis ORF clones.</title>
        <authorList>
            <person name="Kim C.J."/>
            <person name="Chen H."/>
            <person name="Cheuk R.F."/>
            <person name="Shinn P."/>
            <person name="Ecker J.R."/>
        </authorList>
    </citation>
    <scope>NUCLEOTIDE SEQUENCE [LARGE SCALE MRNA]</scope>
    <source>
        <strain>cv. Columbia</strain>
    </source>
</reference>
<reference key="4">
    <citation type="journal article" date="2014" name="Proc. Natl. Acad. Sci. U.S.A.">
        <title>The Golgi localized bifunctional UDP-rhamnose/UDP-galactose transporter family of Arabidopsis.</title>
        <authorList>
            <person name="Rautengarten C."/>
            <person name="Ebert B."/>
            <person name="Moreno I."/>
            <person name="Temple H."/>
            <person name="Herter T."/>
            <person name="Link B."/>
            <person name="Donas-Cofre D."/>
            <person name="Moreno A."/>
            <person name="Saez-Aguayo S."/>
            <person name="Blanco F."/>
            <person name="Mortimer J.C."/>
            <person name="Schultink A."/>
            <person name="Reiter W.D."/>
            <person name="Dupree P."/>
            <person name="Pauly M."/>
            <person name="Heazlewood J.L."/>
            <person name="Scheller H.V."/>
            <person name="Orellana A."/>
        </authorList>
    </citation>
    <scope>GENE FAMILY</scope>
</reference>
<sequence>MKMATNGRFFTIGLVASWYSSNIGVLLLNKYLLSNYGFKYPIFLTMCHMTACSLLSYVAIAWLKMVPMQTIRSRVQFFKIAALSLVFCVSVVFGNISLRFLPVSFNQAIGATTPFFTAVFAYLMTRKKEAWLTYFTLVPVVTGVVIASGGEPSFHLFGFLMCIAATAARALKSVLQGILLSSEGEKLNSMNLLLYMAPIAVVLLLPATLIMEKNVVGITIALARDDFRIVWYLLFNSALAYLVNLTNFLVTNHTSALTLQVLGNAKGAVAVVVSILIFKNPVSVTGMLGYSLTVCGVILYSEAKKRNKN</sequence>
<name>PT505_ARATH</name>
<evidence type="ECO:0000255" key="1"/>
<evidence type="ECO:0000305" key="2"/>